<sequence>MSPAFDIAPLDATFGAVVTGVKLADLDDAGWLDLQAAWLEYALLVFPDQHLTREQQIAFARRFGPLEFEMAAISNVRPDGSLRVESDNDDMMKILKGNMGWHADSTYMPVQAKGAVFSAEVVPSVGGQTGFADMRAAYDALDEDLKARVETLQARHSLHYSQSKLGHQTKAADGEYSGYGLHDGPVPLRPLVKIHPETGRKSLLIGRHAHAIPGLEPAESERLLQQLIDFACQPPRIYHHDWAPGDAVLWDNRCLLHQATPWDMTQKRIMWHSRIAGDPASETALAH</sequence>
<proteinExistence type="evidence at protein level"/>
<feature type="chain" id="PRO_0000430762" description="(S)-phenoxypropionate/alpha-ketoglutarate-dioxygenase">
    <location>
        <begin position="1"/>
        <end position="287"/>
    </location>
</feature>
<feature type="binding site" evidence="1">
    <location>
        <position position="102"/>
    </location>
    <ligand>
        <name>Fe cation</name>
        <dbReference type="ChEBI" id="CHEBI:24875"/>
        <note>catalytic</note>
    </ligand>
</feature>
<feature type="binding site" evidence="1">
    <location>
        <position position="104"/>
    </location>
    <ligand>
        <name>Fe cation</name>
        <dbReference type="ChEBI" id="CHEBI:24875"/>
        <note>catalytic</note>
    </ligand>
</feature>
<feature type="binding site" evidence="1">
    <location>
        <position position="129"/>
    </location>
    <ligand>
        <name>2-oxoglutarate</name>
        <dbReference type="ChEBI" id="CHEBI:16810"/>
    </ligand>
</feature>
<feature type="binding site" evidence="1">
    <location>
        <position position="242"/>
    </location>
    <ligand>
        <name>2-oxoglutarate</name>
        <dbReference type="ChEBI" id="CHEBI:16810"/>
    </ligand>
</feature>
<feature type="binding site" evidence="1">
    <location>
        <position position="257"/>
    </location>
    <ligand>
        <name>Fe cation</name>
        <dbReference type="ChEBI" id="CHEBI:24875"/>
        <note>catalytic</note>
    </ligand>
</feature>
<feature type="binding site" evidence="1">
    <location>
        <position position="268"/>
    </location>
    <ligand>
        <name>2-oxoglutarate</name>
        <dbReference type="ChEBI" id="CHEBI:16810"/>
    </ligand>
</feature>
<feature type="site" description="Contributes to enantiospecificity" evidence="6">
    <location>
        <position position="69"/>
    </location>
</feature>
<feature type="site" description="Contributes to enantiospecificity" evidence="6">
    <location>
        <position position="207"/>
    </location>
</feature>
<feature type="mutagenesis site" description="The dioxygenase activity with S-2,4-MCPP and (RS)-2,4-MCPP is 30% and 20% of the wild-type, respectively. Slight increase of the affinity binding for S-2,4-MCPP and (RS)-2,4-MCPP." evidence="2">
    <original>E</original>
    <variation>A</variation>
    <location>
        <position position="69"/>
    </location>
</feature>
<feature type="mutagenesis site" description="The dioxygenase activity with S-2,4-MCPP and (RS)-2,4-MCPP is strongly reduced and there is a 18-fold decrease of the affinity binding for S-2,4-MCPP; when associated with G-98." evidence="2">
    <original>G</original>
    <variation>I</variation>
    <location>
        <position position="97"/>
    </location>
</feature>
<feature type="mutagenesis site" description="Loss of the dioxygenase activity; when associated with G-98." evidence="2">
    <original>G</original>
    <variation>N</variation>
    <location>
        <position position="97"/>
    </location>
</feature>
<feature type="mutagenesis site" description="The dioxygenase activity with S-2,4-MCPP and (RS)-2,4-MCPP is strongly reduced; when associated with I-97. Loss of the dioxygenase activity; when associated with N-97." evidence="2">
    <original>N</original>
    <variation>G</variation>
    <location>
        <position position="98"/>
    </location>
</feature>
<feature type="mutagenesis site" description="The dioxygenase activity with S-2,4-MCPP and (RS)-2,4-MCPP is strongly reduced." evidence="2">
    <original>Q</original>
    <variation>F</variation>
    <location>
        <position position="162"/>
    </location>
</feature>
<feature type="mutagenesis site" description="The dioxygenase activity with S-2,4-MCPP and (RS)-2,4-MCPP is 17 and 8% of the wild-type, respectively. 15 and 10-fold decrease of the affinity binding for S-2,4-MCPP and (RS)-2,4-MCPP, respectively." evidence="2">
    <original>R</original>
    <variation>A</variation>
    <location>
        <position position="207"/>
    </location>
</feature>
<feature type="mutagenesis site" description="The dioxygenase activity with S-2,4-MCPP and (RS)-2,4-MCPP is strongly reduced." evidence="2">
    <original>R</original>
    <variation>V</variation>
    <location>
        <position position="207"/>
    </location>
</feature>
<feature type="mutagenesis site" description="The dioxygenase activity with S-2,4-MCPP and (RS)-2,4-MCPP is strongly reduced. 18-fold decrease of the affinity binding for R-2,4-MCPP." evidence="2">
    <original>H</original>
    <variation>A</variation>
    <location>
        <position position="208"/>
    </location>
</feature>
<feature type="mutagenesis site" description="The dioxygenase activity with S-2,4-MCPP and (RS)-2,4-MCPP is strongly reduced." evidence="2">
    <original>H</original>
    <variation>A</variation>
    <location>
        <position position="272"/>
    </location>
</feature>
<feature type="mutagenesis site" description="Loss of the dioxygenase activity." evidence="2">
    <original>R</original>
    <variation>A</variation>
    <location>
        <position position="274"/>
    </location>
</feature>
<reference key="1">
    <citation type="journal article" date="1999" name="J. Ind. Microbiol. Biotechnol.">
        <title>Sphingomonas herbicidovorans MH: a versatile phenoxyalkanoic acid herbicide degrader.</title>
        <authorList>
            <person name="Kohler H.P.E."/>
        </authorList>
    </citation>
    <scope>NUCLEOTIDE SEQUENCE [GENOMIC DNA]</scope>
    <scope>FUNCTION</scope>
    <source>
        <strain>ATCC 700291 / DSM 11019 / CCUG 56400 / KCTC 2939 / LMG 18315 / NBRC 16415 / MH</strain>
    </source>
</reference>
<reference key="2">
    <citation type="journal article" date="2004" name="Appl. Environ. Microbiol.">
        <title>Genetic analysis of phenoxyalkanoic acid degradation in Sphingomonas herbicidovorans MH.</title>
        <authorList>
            <person name="Mueller T.A."/>
            <person name="Byrde S.M."/>
            <person name="Werlen C."/>
            <person name="van der Meer J.R."/>
            <person name="Kohler H.P.E."/>
        </authorList>
    </citation>
    <scope>NUCLEOTIDE SEQUENCE [GENOMIC DNA]</scope>
    <source>
        <strain>ATCC 700291 / DSM 11019 / CCUG 56400 / KCTC 2939 / LMG 18315 / NBRC 16415 / MH</strain>
    </source>
</reference>
<reference key="3">
    <citation type="journal article" date="2006" name="Appl. Environ. Microbiol.">
        <title>Purification and characterization of two enantioselective alpha-ketoglutarate-dependent dioxygenases, RdpA and SdpA, from Sphingomonas herbicidovorans MH.</title>
        <authorList>
            <person name="Mueller T.A."/>
            <person name="Fleischmann T."/>
            <person name="van der Meer J.R."/>
            <person name="Kohler H.P."/>
        </authorList>
    </citation>
    <scope>FUNCTION</scope>
    <scope>CATALYTIC ACTIVITY</scope>
    <scope>BIOPHYSICOCHEMICAL PROPERTIES</scope>
    <scope>SUBUNIT</scope>
    <scope>COFACTOR</scope>
    <scope>SUBSTRATE SPECIFICITY</scope>
    <scope>PATHWAY</scope>
    <source>
        <strain>ATCC 700291 / DSM 11019 / CCUG 56400 / KCTC 2939 / LMG 18315 / NBRC 16415 / MH</strain>
    </source>
</reference>
<reference key="4">
    <citation type="journal article" date="2006" name="Protein Sci.">
        <title>Structural basis for the enantiospecificities of R- and S-specific phenoxypropionate/alpha-ketoglutarate dioxygenases.</title>
        <authorList>
            <person name="Mueller T.A."/>
            <person name="Zavodszky M.I."/>
            <person name="Feig M."/>
            <person name="Kuhn L.A."/>
            <person name="Hausinger R.P."/>
        </authorList>
    </citation>
    <scope>FUNCTION</scope>
    <scope>CATALYTIC ACTIVITY</scope>
    <scope>BIOPHYSICOCHEMICAL PROPERTIES</scope>
    <scope>MUTAGENESIS OF GLU-69; GLY-97; ASN-98; GLN-162; ARG-207; HIS-208 AND HIS-272</scope>
    <source>
        <strain>Strain MH</strain>
    </source>
</reference>
<keyword id="KW-0058">Aromatic hydrocarbons catabolism</keyword>
<keyword id="KW-0223">Dioxygenase</keyword>
<keyword id="KW-0408">Iron</keyword>
<keyword id="KW-0479">Metal-binding</keyword>
<keyword id="KW-0560">Oxidoreductase</keyword>
<comment type="function">
    <text evidence="2 3 4">Involved in the degradation of the phenoxypropionate herbicides. Catalyzes the enantiospecific cleavage of the ether bond in the herbicid S-dichlorprop ((S)-2-(2,4-dichlorophenoxy)propionate)(S-2,4-DP) and S-mecoprop ((S)-2-(4-chloro-2-methylphenoxy)propionate)(S-2,4-MCPP). It can also accept (RS)-2-(4-chloro-2-methylphenoxy)propionate ((RS)-2,4-MCPP) and phenoxyacetate derivatives such as 2,4-dichlorophenoxyacetate (2,4-D), however it can only accept 2-oxoglutarate as oxygen acceptor.</text>
</comment>
<comment type="catalytic activity">
    <reaction evidence="2 3">
        <text>(S)-2-(4-chloro-2-methylphenoxy)propanoate + 2-oxoglutarate + O2 = 2-methyl-4-chlorophenol + pyruvate + succinate + CO2</text>
        <dbReference type="Rhea" id="RHEA:37831"/>
        <dbReference type="ChEBI" id="CHEBI:1800"/>
        <dbReference type="ChEBI" id="CHEBI:15361"/>
        <dbReference type="ChEBI" id="CHEBI:15379"/>
        <dbReference type="ChEBI" id="CHEBI:16526"/>
        <dbReference type="ChEBI" id="CHEBI:16810"/>
        <dbReference type="ChEBI" id="CHEBI:30031"/>
        <dbReference type="ChEBI" id="CHEBI:75285"/>
        <dbReference type="EC" id="1.14.11.43"/>
    </reaction>
</comment>
<comment type="catalytic activity">
    <reaction evidence="2 3">
        <text>(S)-(2,4-dichlorophenoxy)propanoate + 2-oxoglutarate + O2 = 2,4-dichlorophenol + pyruvate + succinate + CO2</text>
        <dbReference type="Rhea" id="RHEA:37827"/>
        <dbReference type="ChEBI" id="CHEBI:15361"/>
        <dbReference type="ChEBI" id="CHEBI:15379"/>
        <dbReference type="ChEBI" id="CHEBI:16526"/>
        <dbReference type="ChEBI" id="CHEBI:16738"/>
        <dbReference type="ChEBI" id="CHEBI:16810"/>
        <dbReference type="ChEBI" id="CHEBI:30031"/>
        <dbReference type="ChEBI" id="CHEBI:75287"/>
        <dbReference type="EC" id="1.14.11.43"/>
    </reaction>
</comment>
<comment type="cofactor">
    <cofactor evidence="3">
        <name>Fe cation</name>
        <dbReference type="ChEBI" id="CHEBI:24875"/>
    </cofactor>
</comment>
<comment type="cofactor">
    <cofactor evidence="3">
        <name>L-ascorbate</name>
        <dbReference type="ChEBI" id="CHEBI:38290"/>
    </cofactor>
</comment>
<comment type="biophysicochemical properties">
    <kinetics>
        <KM evidence="3">19.6 uM for alpha-ketoglutarate (at pH 6.75 and 30 degrees Celsius)</KM>
        <KM evidence="3">132 uM for S-2,4-MCPP (at pH 6.75 and 30 degrees Celsius)</KM>
        <KM evidence="2">161 uM for S-2,4-MCPP (at pH 6.75 and 30 degrees Celsius)</KM>
        <KM evidence="2">234 uM for (RS)-2,4-MCPP (at pH 6.75 and 30 degrees Celsius)</KM>
        <KM evidence="3">494.8 uM for S-2,4-DP (at pH 6.75 and 30 degrees Celsius)</KM>
        <text evidence="2 3">kcat is 229.7 min(-1) for dioxygenase activity with alpha-ketoglutarate (at pH 6.75 and 30 degrees Celsius). kcat is 284.6 min(-1) for dioxygenase activity with S-2,4-DP (at pH 6.75 and 30 degrees Celsius). kcat is 303 min(-1) for dioxygenase activity with S-2,4-MCPP (at pH 6.75 and 30 degrees Celsius). kcat is 899 min(-1) for dioxygenase activity with (RS)-2,4-MCPP (at pH 6.75 and 30 degrees Celsius). kcat is 1010 min(-1) for dioxygenase activity with S-2,4-MCPP (at pH 6.75 and 30 degrees Celsius).</text>
    </kinetics>
    <phDependence>
        <text evidence="3">Optimum pH is about 6.5.</text>
    </phDependence>
    <temperatureDependence>
        <text evidence="3">Optimum temperature is between 35 and 40 degrees Celsius.</text>
    </temperatureDependence>
</comment>
<comment type="pathway">
    <text evidence="9">Xenobiotic degradation; 2-(2,4-dichlorophenoxy)propanoate degradation.</text>
</comment>
<comment type="subunit">
    <text evidence="3">Monomer.</text>
</comment>
<comment type="similarity">
    <text evidence="8">Belongs to the TfdA dioxygenase family.</text>
</comment>
<gene>
    <name evidence="5" type="primary">sdpA</name>
</gene>
<organism>
    <name type="scientific">Sphingobium herbicidovorans (strain ATCC 700291 / DSM 11019 / CCUG 56400 / KCTC 2939 / LMG 18315 / NBRC 16415 / MH)</name>
    <name type="common">Sphingomonas herbicidovorans</name>
    <dbReference type="NCBI Taxonomy" id="1219045"/>
    <lineage>
        <taxon>Bacteria</taxon>
        <taxon>Pseudomonadati</taxon>
        <taxon>Pseudomonadota</taxon>
        <taxon>Alphaproteobacteria</taxon>
        <taxon>Sphingomonadales</taxon>
        <taxon>Sphingomonadaceae</taxon>
        <taxon>Sphingobium</taxon>
    </lineage>
</organism>
<accession>Q700X4</accession>
<dbReference type="EC" id="1.14.11.43" evidence="2 3"/>
<dbReference type="EMBL" id="AJ628860">
    <property type="protein sequence ID" value="CAF32813.1"/>
    <property type="molecule type" value="Genomic_DNA"/>
</dbReference>
<dbReference type="RefSeq" id="WP_037468461.1">
    <property type="nucleotide sequence ID" value="NZ_JFZA02000051.1"/>
</dbReference>
<dbReference type="SMR" id="Q700X4"/>
<dbReference type="STRING" id="76947.GCA_002080435_03049"/>
<dbReference type="eggNOG" id="COG2175">
    <property type="taxonomic scope" value="Bacteria"/>
</dbReference>
<dbReference type="OrthoDB" id="7209371at2"/>
<dbReference type="BRENDA" id="1.14.11.43">
    <property type="organism ID" value="13179"/>
</dbReference>
<dbReference type="UniPathway" id="UPA00348"/>
<dbReference type="GO" id="GO:0051213">
    <property type="term" value="F:dioxygenase activity"/>
    <property type="evidence" value="ECO:0007669"/>
    <property type="project" value="UniProtKB-KW"/>
</dbReference>
<dbReference type="GO" id="GO:0046872">
    <property type="term" value="F:metal ion binding"/>
    <property type="evidence" value="ECO:0007669"/>
    <property type="project" value="UniProtKB-KW"/>
</dbReference>
<dbReference type="GO" id="GO:0009056">
    <property type="term" value="P:catabolic process"/>
    <property type="evidence" value="ECO:0007669"/>
    <property type="project" value="UniProtKB-KW"/>
</dbReference>
<dbReference type="Gene3D" id="3.60.130.10">
    <property type="entry name" value="Clavaminate synthase-like"/>
    <property type="match status" value="1"/>
</dbReference>
<dbReference type="InterPro" id="IPR042098">
    <property type="entry name" value="TauD-like_sf"/>
</dbReference>
<dbReference type="InterPro" id="IPR003819">
    <property type="entry name" value="TauD/TfdA-like"/>
</dbReference>
<dbReference type="InterPro" id="IPR051178">
    <property type="entry name" value="TfdA_dioxygenase"/>
</dbReference>
<dbReference type="PANTHER" id="PTHR43779:SF3">
    <property type="entry name" value="(3R)-3-[(CARBOXYMETHYL)AMINO]FATTY ACID OXYGENASE_DECARBOXYLASE"/>
    <property type="match status" value="1"/>
</dbReference>
<dbReference type="PANTHER" id="PTHR43779">
    <property type="entry name" value="DIOXYGENASE RV0097-RELATED"/>
    <property type="match status" value="1"/>
</dbReference>
<dbReference type="Pfam" id="PF02668">
    <property type="entry name" value="TauD"/>
    <property type="match status" value="1"/>
</dbReference>
<dbReference type="SUPFAM" id="SSF51197">
    <property type="entry name" value="Clavaminate synthase-like"/>
    <property type="match status" value="1"/>
</dbReference>
<evidence type="ECO:0000250" key="1">
    <source>
        <dbReference type="UniProtKB" id="P37610"/>
    </source>
</evidence>
<evidence type="ECO:0000269" key="2">
    <source>
    </source>
</evidence>
<evidence type="ECO:0000269" key="3">
    <source>
    </source>
</evidence>
<evidence type="ECO:0000303" key="4">
    <source>
    </source>
</evidence>
<evidence type="ECO:0000303" key="5">
    <source>
    </source>
</evidence>
<evidence type="ECO:0000303" key="6">
    <source>
    </source>
</evidence>
<evidence type="ECO:0000303" key="7">
    <source>
    </source>
</evidence>
<evidence type="ECO:0000305" key="8"/>
<evidence type="ECO:0000305" key="9">
    <source>
    </source>
</evidence>
<protein>
    <recommendedName>
        <fullName evidence="5">(S)-phenoxypropionate/alpha-ketoglutarate-dioxygenase</fullName>
        <shortName evidence="5">SdpA</shortName>
        <ecNumber evidence="2 3">1.14.11.43</ecNumber>
    </recommendedName>
    <alternativeName>
        <fullName evidence="7">(S)-dichlorprop/(S)-mecoprop dioxygenase</fullName>
    </alternativeName>
    <alternativeName>
        <fullName evidence="7">Alpha-ketoglutarate-dependent dioxygenase</fullName>
    </alternativeName>
    <alternativeName>
        <fullName evidence="7">Dichlorprop/alpha-ketoglutarate-dioxygenase</fullName>
    </alternativeName>
    <alternativeName>
        <fullName evidence="7">Mecoprop/alpha-ketoglutarate-dioxygenase</fullName>
    </alternativeName>
</protein>
<name>SDPA_SPHHM</name>